<name>FABZ_DEIRA</name>
<sequence>MSLMTPLLIRDVLKALPHRYPFVLVDRVFSTENGEVHALKNVTINEPFFMGHFPTEPVMPGVLITEALAQASMFCLHGQMEPGQIGYLAGIEGARFKRKVIPGDQLHLHAKLEFLRRGLGKTTCRAEVDGEVAAEMQILFAVAKG</sequence>
<reference key="1">
    <citation type="journal article" date="1999" name="Science">
        <title>Genome sequence of the radioresistant bacterium Deinococcus radiodurans R1.</title>
        <authorList>
            <person name="White O."/>
            <person name="Eisen J.A."/>
            <person name="Heidelberg J.F."/>
            <person name="Hickey E.K."/>
            <person name="Peterson J.D."/>
            <person name="Dodson R.J."/>
            <person name="Haft D.H."/>
            <person name="Gwinn M.L."/>
            <person name="Nelson W.C."/>
            <person name="Richardson D.L."/>
            <person name="Moffat K.S."/>
            <person name="Qin H."/>
            <person name="Jiang L."/>
            <person name="Pamphile W."/>
            <person name="Crosby M."/>
            <person name="Shen M."/>
            <person name="Vamathevan J.J."/>
            <person name="Lam P."/>
            <person name="McDonald L.A."/>
            <person name="Utterback T.R."/>
            <person name="Zalewski C."/>
            <person name="Makarova K.S."/>
            <person name="Aravind L."/>
            <person name="Daly M.J."/>
            <person name="Minton K.W."/>
            <person name="Fleischmann R.D."/>
            <person name="Ketchum K.A."/>
            <person name="Nelson K.E."/>
            <person name="Salzberg S.L."/>
            <person name="Smith H.O."/>
            <person name="Venter J.C."/>
            <person name="Fraser C.M."/>
        </authorList>
    </citation>
    <scope>NUCLEOTIDE SEQUENCE [LARGE SCALE GENOMIC DNA]</scope>
    <source>
        <strain>ATCC 13939 / DSM 20539 / JCM 16871 / CCUG 27074 / LMG 4051 / NBRC 15346 / NCIMB 9279 / VKM B-1422 / R1</strain>
    </source>
</reference>
<evidence type="ECO:0000255" key="1">
    <source>
        <dbReference type="HAMAP-Rule" id="MF_00406"/>
    </source>
</evidence>
<evidence type="ECO:0000305" key="2"/>
<comment type="function">
    <text evidence="1">Involved in unsaturated fatty acids biosynthesis. Catalyzes the dehydration of short chain beta-hydroxyacyl-ACPs and long chain saturated and unsaturated beta-hydroxyacyl-ACPs.</text>
</comment>
<comment type="catalytic activity">
    <reaction evidence="1">
        <text>a (3R)-hydroxyacyl-[ACP] = a (2E)-enoyl-[ACP] + H2O</text>
        <dbReference type="Rhea" id="RHEA:13097"/>
        <dbReference type="Rhea" id="RHEA-COMP:9925"/>
        <dbReference type="Rhea" id="RHEA-COMP:9945"/>
        <dbReference type="ChEBI" id="CHEBI:15377"/>
        <dbReference type="ChEBI" id="CHEBI:78784"/>
        <dbReference type="ChEBI" id="CHEBI:78827"/>
        <dbReference type="EC" id="4.2.1.59"/>
    </reaction>
</comment>
<comment type="subcellular location">
    <subcellularLocation>
        <location evidence="1">Cytoplasm</location>
    </subcellularLocation>
</comment>
<comment type="similarity">
    <text evidence="1">Belongs to the thioester dehydratase family. FabZ subfamily.</text>
</comment>
<comment type="sequence caution" evidence="2">
    <conflict type="erroneous initiation">
        <sequence resource="EMBL-CDS" id="AAF10647"/>
    </conflict>
</comment>
<protein>
    <recommendedName>
        <fullName evidence="1">3-hydroxyacyl-[acyl-carrier-protein] dehydratase FabZ</fullName>
        <ecNumber evidence="1">4.2.1.59</ecNumber>
    </recommendedName>
    <alternativeName>
        <fullName evidence="1">(3R)-hydroxymyristoyl-[acyl-carrier-protein] dehydratase</fullName>
        <shortName evidence="1">(3R)-hydroxymyristoyl-ACP dehydrase</shortName>
    </alternativeName>
    <alternativeName>
        <fullName evidence="1">Beta-hydroxyacyl-ACP dehydratase</fullName>
    </alternativeName>
</protein>
<gene>
    <name evidence="1" type="primary">fabZ</name>
    <name type="ordered locus">DR_1074</name>
</gene>
<feature type="chain" id="PRO_0000091670" description="3-hydroxyacyl-[acyl-carrier-protein] dehydratase FabZ">
    <location>
        <begin position="1"/>
        <end position="145"/>
    </location>
</feature>
<feature type="active site" evidence="1">
    <location>
        <position position="52"/>
    </location>
</feature>
<dbReference type="EC" id="4.2.1.59" evidence="1"/>
<dbReference type="EMBL" id="AE000513">
    <property type="protein sequence ID" value="AAF10647.1"/>
    <property type="status" value="ALT_INIT"/>
    <property type="molecule type" value="Genomic_DNA"/>
</dbReference>
<dbReference type="PIR" id="D75439">
    <property type="entry name" value="D75439"/>
</dbReference>
<dbReference type="RefSeq" id="NP_294798.1">
    <property type="nucleotide sequence ID" value="NC_001263.1"/>
</dbReference>
<dbReference type="SMR" id="Q9RVF5"/>
<dbReference type="FunCoup" id="Q9RVF5">
    <property type="interactions" value="381"/>
</dbReference>
<dbReference type="STRING" id="243230.DR_1074"/>
<dbReference type="PaxDb" id="243230-DR_1074"/>
<dbReference type="EnsemblBacteria" id="AAF10647">
    <property type="protein sequence ID" value="AAF10647"/>
    <property type="gene ID" value="DR_1074"/>
</dbReference>
<dbReference type="KEGG" id="dra:DR_1074"/>
<dbReference type="PATRIC" id="fig|243230.17.peg.1269"/>
<dbReference type="eggNOG" id="COG0764">
    <property type="taxonomic scope" value="Bacteria"/>
</dbReference>
<dbReference type="HOGENOM" id="CLU_1105725_0_0_0"/>
<dbReference type="InParanoid" id="Q9RVF5"/>
<dbReference type="OrthoDB" id="9772788at2"/>
<dbReference type="Proteomes" id="UP000002524">
    <property type="component" value="Chromosome 1"/>
</dbReference>
<dbReference type="GO" id="GO:0005737">
    <property type="term" value="C:cytoplasm"/>
    <property type="evidence" value="ECO:0007669"/>
    <property type="project" value="UniProtKB-SubCell"/>
</dbReference>
<dbReference type="GO" id="GO:0016020">
    <property type="term" value="C:membrane"/>
    <property type="evidence" value="ECO:0007669"/>
    <property type="project" value="GOC"/>
</dbReference>
<dbReference type="GO" id="GO:0019171">
    <property type="term" value="F:(3R)-hydroxyacyl-[acyl-carrier-protein] dehydratase activity"/>
    <property type="evidence" value="ECO:0007669"/>
    <property type="project" value="UniProtKB-EC"/>
</dbReference>
<dbReference type="GO" id="GO:0006633">
    <property type="term" value="P:fatty acid biosynthetic process"/>
    <property type="evidence" value="ECO:0007669"/>
    <property type="project" value="UniProtKB-UniRule"/>
</dbReference>
<dbReference type="GO" id="GO:0009245">
    <property type="term" value="P:lipid A biosynthetic process"/>
    <property type="evidence" value="ECO:0007669"/>
    <property type="project" value="UniProtKB-UniRule"/>
</dbReference>
<dbReference type="CDD" id="cd01288">
    <property type="entry name" value="FabZ"/>
    <property type="match status" value="1"/>
</dbReference>
<dbReference type="FunFam" id="3.10.129.10:FF:000001">
    <property type="entry name" value="3-hydroxyacyl-[acyl-carrier-protein] dehydratase FabZ"/>
    <property type="match status" value="1"/>
</dbReference>
<dbReference type="Gene3D" id="3.10.129.10">
    <property type="entry name" value="Hotdog Thioesterase"/>
    <property type="match status" value="1"/>
</dbReference>
<dbReference type="HAMAP" id="MF_00406">
    <property type="entry name" value="FabZ"/>
    <property type="match status" value="1"/>
</dbReference>
<dbReference type="InterPro" id="IPR013114">
    <property type="entry name" value="FabA_FabZ"/>
</dbReference>
<dbReference type="InterPro" id="IPR010084">
    <property type="entry name" value="FabZ"/>
</dbReference>
<dbReference type="InterPro" id="IPR029069">
    <property type="entry name" value="HotDog_dom_sf"/>
</dbReference>
<dbReference type="NCBIfam" id="TIGR01750">
    <property type="entry name" value="fabZ"/>
    <property type="match status" value="1"/>
</dbReference>
<dbReference type="NCBIfam" id="NF000582">
    <property type="entry name" value="PRK00006.1"/>
    <property type="match status" value="1"/>
</dbReference>
<dbReference type="PANTHER" id="PTHR30272">
    <property type="entry name" value="3-HYDROXYACYL-[ACYL-CARRIER-PROTEIN] DEHYDRATASE"/>
    <property type="match status" value="1"/>
</dbReference>
<dbReference type="PANTHER" id="PTHR30272:SF1">
    <property type="entry name" value="3-HYDROXYACYL-[ACYL-CARRIER-PROTEIN] DEHYDRATASE"/>
    <property type="match status" value="1"/>
</dbReference>
<dbReference type="Pfam" id="PF07977">
    <property type="entry name" value="FabA"/>
    <property type="match status" value="1"/>
</dbReference>
<dbReference type="SUPFAM" id="SSF54637">
    <property type="entry name" value="Thioesterase/thiol ester dehydrase-isomerase"/>
    <property type="match status" value="1"/>
</dbReference>
<accession>Q9RVF5</accession>
<proteinExistence type="inferred from homology"/>
<organism>
    <name type="scientific">Deinococcus radiodurans (strain ATCC 13939 / DSM 20539 / JCM 16871 / CCUG 27074 / LMG 4051 / NBRC 15346 / NCIMB 9279 / VKM B-1422 / R1)</name>
    <dbReference type="NCBI Taxonomy" id="243230"/>
    <lineage>
        <taxon>Bacteria</taxon>
        <taxon>Thermotogati</taxon>
        <taxon>Deinococcota</taxon>
        <taxon>Deinococci</taxon>
        <taxon>Deinococcales</taxon>
        <taxon>Deinococcaceae</taxon>
        <taxon>Deinococcus</taxon>
    </lineage>
</organism>
<keyword id="KW-0963">Cytoplasm</keyword>
<keyword id="KW-0441">Lipid A biosynthesis</keyword>
<keyword id="KW-0444">Lipid biosynthesis</keyword>
<keyword id="KW-0443">Lipid metabolism</keyword>
<keyword id="KW-0456">Lyase</keyword>
<keyword id="KW-1185">Reference proteome</keyword>